<evidence type="ECO:0000269" key="1">
    <source>
    </source>
</evidence>
<evidence type="ECO:0000269" key="2">
    <source>
    </source>
</evidence>
<evidence type="ECO:0000269" key="3">
    <source>
    </source>
</evidence>
<evidence type="ECO:0000305" key="4"/>
<organism>
    <name type="scientific">Escherichia coli (strain K12)</name>
    <dbReference type="NCBI Taxonomy" id="83333"/>
    <lineage>
        <taxon>Bacteria</taxon>
        <taxon>Pseudomonadati</taxon>
        <taxon>Pseudomonadota</taxon>
        <taxon>Gammaproteobacteria</taxon>
        <taxon>Enterobacterales</taxon>
        <taxon>Enterobacteriaceae</taxon>
        <taxon>Escherichia</taxon>
    </lineage>
</organism>
<comment type="function">
    <text evidence="1 2">Catalyzes the formation of 2-(5''-triphosphoribosyl)-3'-dephosphocoenzyme-A, the precursor of the prosthetic group of the holo-acyl carrier protein (gamma chain) of citrate lyase, from ATP and dephospho-CoA.</text>
</comment>
<comment type="catalytic activity">
    <reaction evidence="2">
        <text>3'-dephospho-CoA + ATP = 2'-(5''-triphospho-alpha-D-ribosyl)-3'-dephospho-CoA + adenine</text>
        <dbReference type="Rhea" id="RHEA:15117"/>
        <dbReference type="ChEBI" id="CHEBI:16708"/>
        <dbReference type="ChEBI" id="CHEBI:30616"/>
        <dbReference type="ChEBI" id="CHEBI:57328"/>
        <dbReference type="ChEBI" id="CHEBI:61378"/>
        <dbReference type="EC" id="2.4.2.52"/>
    </reaction>
</comment>
<comment type="induction">
    <text evidence="3">Repressed by H-NS. Part of the citCDEFXG operon.</text>
</comment>
<comment type="similarity">
    <text evidence="4">Belongs to the CitG/MdcB family.</text>
</comment>
<keyword id="KW-0067">ATP-binding</keyword>
<keyword id="KW-0547">Nucleotide-binding</keyword>
<keyword id="KW-1185">Reference proteome</keyword>
<keyword id="KW-0808">Transferase</keyword>
<reference key="1">
    <citation type="submission" date="1997-01" db="EMBL/GenBank/DDBJ databases">
        <title>Sequence of minutes 4-25 of Escherichia coli.</title>
        <authorList>
            <person name="Chung E."/>
            <person name="Allen E."/>
            <person name="Araujo R."/>
            <person name="Aparicio A.M."/>
            <person name="Davis K."/>
            <person name="Duncan M."/>
            <person name="Federspiel N."/>
            <person name="Hyman R."/>
            <person name="Kalman S."/>
            <person name="Komp C."/>
            <person name="Kurdi O."/>
            <person name="Lew H."/>
            <person name="Lin D."/>
            <person name="Namath A."/>
            <person name="Oefner P."/>
            <person name="Roberts D."/>
            <person name="Schramm S."/>
            <person name="Davis R.W."/>
        </authorList>
    </citation>
    <scope>NUCLEOTIDE SEQUENCE [LARGE SCALE GENOMIC DNA]</scope>
    <source>
        <strain>K12 / MG1655 / ATCC 47076</strain>
    </source>
</reference>
<reference key="2">
    <citation type="journal article" date="1997" name="Science">
        <title>The complete genome sequence of Escherichia coli K-12.</title>
        <authorList>
            <person name="Blattner F.R."/>
            <person name="Plunkett G. III"/>
            <person name="Bloch C.A."/>
            <person name="Perna N.T."/>
            <person name="Burland V."/>
            <person name="Riley M."/>
            <person name="Collado-Vides J."/>
            <person name="Glasner J.D."/>
            <person name="Rode C.K."/>
            <person name="Mayhew G.F."/>
            <person name="Gregor J."/>
            <person name="Davis N.W."/>
            <person name="Kirkpatrick H.A."/>
            <person name="Goeden M.A."/>
            <person name="Rose D.J."/>
            <person name="Mau B."/>
            <person name="Shao Y."/>
        </authorList>
    </citation>
    <scope>NUCLEOTIDE SEQUENCE [LARGE SCALE GENOMIC DNA]</scope>
    <source>
        <strain>K12 / MG1655 / ATCC 47076</strain>
    </source>
</reference>
<reference key="3">
    <citation type="journal article" date="2006" name="Mol. Syst. Biol.">
        <title>Highly accurate genome sequences of Escherichia coli K-12 strains MG1655 and W3110.</title>
        <authorList>
            <person name="Hayashi K."/>
            <person name="Morooka N."/>
            <person name="Yamamoto Y."/>
            <person name="Fujita K."/>
            <person name="Isono K."/>
            <person name="Choi S."/>
            <person name="Ohtsubo E."/>
            <person name="Baba T."/>
            <person name="Wanner B.L."/>
            <person name="Mori H."/>
            <person name="Horiuchi T."/>
        </authorList>
    </citation>
    <scope>NUCLEOTIDE SEQUENCE [LARGE SCALE GENOMIC DNA]</scope>
    <source>
        <strain>K12 / W3110 / ATCC 27325 / DSM 5911</strain>
    </source>
</reference>
<reference key="4">
    <citation type="journal article" date="2000" name="FEBS Lett.">
        <title>Identification of triphosphoribosyl-dephospho-CoA as precursor of the citrate lyase prosthetic group.</title>
        <authorList>
            <person name="Schneider K."/>
            <person name="Dimroth P."/>
            <person name="Bott M."/>
        </authorList>
    </citation>
    <scope>FUNCTION</scope>
    <scope>CATALYTIC ACTIVITY</scope>
</reference>
<reference key="5">
    <citation type="journal article" date="2000" name="Biochemistry">
        <title>Biosynthesis of the prosthetic group of citrate lyase.</title>
        <authorList>
            <person name="Schneider K."/>
            <person name="Dimroth P."/>
            <person name="Bott M."/>
        </authorList>
    </citation>
    <scope>FUNCTION</scope>
    <source>
        <strain>BL21-DE3</strain>
        <strain>K12 / DH5-alpha</strain>
    </source>
</reference>
<reference key="6">
    <citation type="journal article" date="2009" name="J. Bacteriol.">
        <title>Involvement of the leucine response transcription factor LeuO in regulation of the genes for sulfa drug efflux.</title>
        <authorList>
            <person name="Shimada T."/>
            <person name="Yamamoto K."/>
            <person name="Ishihama A."/>
        </authorList>
    </citation>
    <scope>OPERON STRUCTURE</scope>
    <scope>INDUCTION</scope>
    <source>
        <strain>K12 / BW25113</strain>
    </source>
</reference>
<dbReference type="EC" id="2.4.2.52" evidence="2"/>
<dbReference type="EMBL" id="U82598">
    <property type="protein sequence ID" value="AAB40813.1"/>
    <property type="molecule type" value="Genomic_DNA"/>
</dbReference>
<dbReference type="EMBL" id="U00096">
    <property type="protein sequence ID" value="AAC73714.1"/>
    <property type="molecule type" value="Genomic_DNA"/>
</dbReference>
<dbReference type="EMBL" id="AP009048">
    <property type="protein sequence ID" value="BAE76353.1"/>
    <property type="molecule type" value="Genomic_DNA"/>
</dbReference>
<dbReference type="PIR" id="C64795">
    <property type="entry name" value="C64795"/>
</dbReference>
<dbReference type="RefSeq" id="NP_415146.1">
    <property type="nucleotide sequence ID" value="NC_000913.3"/>
</dbReference>
<dbReference type="RefSeq" id="WP_000062457.1">
    <property type="nucleotide sequence ID" value="NZ_STEB01000031.1"/>
</dbReference>
<dbReference type="BioGRID" id="4259903">
    <property type="interactions" value="10"/>
</dbReference>
<dbReference type="FunCoup" id="P77231">
    <property type="interactions" value="295"/>
</dbReference>
<dbReference type="IntAct" id="P77231">
    <property type="interactions" value="2"/>
</dbReference>
<dbReference type="STRING" id="511145.b0613"/>
<dbReference type="PaxDb" id="511145-b0613"/>
<dbReference type="EnsemblBacteria" id="AAC73714">
    <property type="protein sequence ID" value="AAC73714"/>
    <property type="gene ID" value="b0613"/>
</dbReference>
<dbReference type="GeneID" id="946395"/>
<dbReference type="KEGG" id="ecj:JW0605"/>
<dbReference type="KEGG" id="eco:b0613"/>
<dbReference type="KEGG" id="ecoc:C3026_03065"/>
<dbReference type="PATRIC" id="fig|1411691.4.peg.1655"/>
<dbReference type="EchoBASE" id="EB3309"/>
<dbReference type="eggNOG" id="COG1767">
    <property type="taxonomic scope" value="Bacteria"/>
</dbReference>
<dbReference type="HOGENOM" id="CLU_056179_1_0_6"/>
<dbReference type="InParanoid" id="P77231"/>
<dbReference type="OMA" id="ACEQAMY"/>
<dbReference type="OrthoDB" id="114886at2"/>
<dbReference type="PhylomeDB" id="P77231"/>
<dbReference type="BioCyc" id="EcoCyc:G6339-MONOMER"/>
<dbReference type="BioCyc" id="MetaCyc:G6339-MONOMER"/>
<dbReference type="BRENDA" id="2.4.2.52">
    <property type="organism ID" value="2026"/>
</dbReference>
<dbReference type="PRO" id="PR:P77231"/>
<dbReference type="Proteomes" id="UP000000625">
    <property type="component" value="Chromosome"/>
</dbReference>
<dbReference type="GO" id="GO:0005524">
    <property type="term" value="F:ATP binding"/>
    <property type="evidence" value="ECO:0007669"/>
    <property type="project" value="UniProtKB-KW"/>
</dbReference>
<dbReference type="GO" id="GO:0046917">
    <property type="term" value="F:triphosphoribosyl-dephospho-CoA synthase activity"/>
    <property type="evidence" value="ECO:0000314"/>
    <property type="project" value="EcoCyc"/>
</dbReference>
<dbReference type="GO" id="GO:0051191">
    <property type="term" value="P:prosthetic group biosynthetic process"/>
    <property type="evidence" value="ECO:0000315"/>
    <property type="project" value="EcoCyc"/>
</dbReference>
<dbReference type="FunFam" id="1.10.4200.10:FF:000001">
    <property type="entry name" value="Triphosphoribosyl-dephospho-CoA synthase CitG"/>
    <property type="match status" value="1"/>
</dbReference>
<dbReference type="Gene3D" id="1.10.4200.10">
    <property type="entry name" value="Triphosphoribosyl-dephospho-CoA protein"/>
    <property type="match status" value="1"/>
</dbReference>
<dbReference type="HAMAP" id="MF_00397">
    <property type="entry name" value="CitG"/>
    <property type="match status" value="1"/>
</dbReference>
<dbReference type="InterPro" id="IPR002736">
    <property type="entry name" value="CitG"/>
</dbReference>
<dbReference type="InterPro" id="IPR017551">
    <property type="entry name" value="TriPribosyl-deP-CoA_syn_CitG"/>
</dbReference>
<dbReference type="NCBIfam" id="TIGR03125">
    <property type="entry name" value="citrate_citG"/>
    <property type="match status" value="1"/>
</dbReference>
<dbReference type="NCBIfam" id="NF007503">
    <property type="entry name" value="PRK10096.1"/>
    <property type="match status" value="1"/>
</dbReference>
<dbReference type="PANTHER" id="PTHR30201:SF2">
    <property type="entry name" value="2-(5''-TRIPHOSPHORIBOSYL)-3'-DEPHOSPHOCOENZYME-A SYNTHASE"/>
    <property type="match status" value="1"/>
</dbReference>
<dbReference type="PANTHER" id="PTHR30201">
    <property type="entry name" value="TRIPHOSPHORIBOSYL-DEPHOSPHO-COA SYNTHASE"/>
    <property type="match status" value="1"/>
</dbReference>
<dbReference type="Pfam" id="PF01874">
    <property type="entry name" value="CitG"/>
    <property type="match status" value="1"/>
</dbReference>
<protein>
    <recommendedName>
        <fullName>2-(5''-triphosphoribosyl)-3'-dephosphocoenzyme-A synthase</fullName>
        <shortName>2-(5''-triphosphoribosyl)-3'-dephospho-CoA synthase</shortName>
        <ecNumber evidence="2">2.4.2.52</ecNumber>
    </recommendedName>
</protein>
<feature type="chain" id="PRO_0000214664" description="2-(5''-triphosphoribosyl)-3'-dephosphocoenzyme-A synthase">
    <location>
        <begin position="1"/>
        <end position="292"/>
    </location>
</feature>
<name>CITG_ECOLI</name>
<sequence>MSMPATSTKTTKLATSLIDEYALLGWRAMLTEVNLSPKPGLVDRINCGAHKDMALEDFHRSALAIQGWLPRFIEFGACSAEMAPEAVLHGLRPIGMACEGDMFRATAGVNTHKGSIFSLGLLCAAIGRLLQLNQPVTPTTVCSTAASFCRGLTDRELRTNNSQLTAGQRLYQQLGLTGARGEAEAGYPLVINHALPHYLTLLDQGLDPELALLDTLLLLMAINGDTNVASRGGEGGLRWLQREAQTLLQKGGIRTPADLDYLRQFDRECIERNLSPGGSADLLILTWFLAQI</sequence>
<accession>P77231</accession>
<accession>Q2MBK3</accession>
<proteinExistence type="evidence at protein level"/>
<gene>
    <name type="primary">citG</name>
    <name type="synonym">ybdT</name>
    <name type="ordered locus">b0613</name>
    <name type="ordered locus">JW0605</name>
</gene>